<gene>
    <name evidence="2" type="primary">ddlB</name>
    <name type="ordered locus">CTC_00291</name>
</gene>
<evidence type="ECO:0000250" key="1"/>
<evidence type="ECO:0000255" key="2">
    <source>
        <dbReference type="HAMAP-Rule" id="MF_00047"/>
    </source>
</evidence>
<keyword id="KW-0067">ATP-binding</keyword>
<keyword id="KW-0133">Cell shape</keyword>
<keyword id="KW-0961">Cell wall biogenesis/degradation</keyword>
<keyword id="KW-0963">Cytoplasm</keyword>
<keyword id="KW-0436">Ligase</keyword>
<keyword id="KW-0460">Magnesium</keyword>
<keyword id="KW-0464">Manganese</keyword>
<keyword id="KW-0479">Metal-binding</keyword>
<keyword id="KW-0547">Nucleotide-binding</keyword>
<keyword id="KW-0573">Peptidoglycan synthesis</keyword>
<keyword id="KW-1185">Reference proteome</keyword>
<dbReference type="EC" id="6.3.2.4" evidence="2"/>
<dbReference type="EMBL" id="AE015927">
    <property type="protein sequence ID" value="AAO34934.1"/>
    <property type="molecule type" value="Genomic_DNA"/>
</dbReference>
<dbReference type="SMR" id="Q898Z5"/>
<dbReference type="STRING" id="212717.CTC_00291"/>
<dbReference type="KEGG" id="ctc:CTC_00291"/>
<dbReference type="HOGENOM" id="CLU_039268_0_0_9"/>
<dbReference type="UniPathway" id="UPA00219"/>
<dbReference type="Proteomes" id="UP000001412">
    <property type="component" value="Chromosome"/>
</dbReference>
<dbReference type="GO" id="GO:0005829">
    <property type="term" value="C:cytosol"/>
    <property type="evidence" value="ECO:0007669"/>
    <property type="project" value="TreeGrafter"/>
</dbReference>
<dbReference type="GO" id="GO:0005524">
    <property type="term" value="F:ATP binding"/>
    <property type="evidence" value="ECO:0007669"/>
    <property type="project" value="UniProtKB-KW"/>
</dbReference>
<dbReference type="GO" id="GO:0008716">
    <property type="term" value="F:D-alanine-D-alanine ligase activity"/>
    <property type="evidence" value="ECO:0007669"/>
    <property type="project" value="UniProtKB-UniRule"/>
</dbReference>
<dbReference type="GO" id="GO:0046872">
    <property type="term" value="F:metal ion binding"/>
    <property type="evidence" value="ECO:0007669"/>
    <property type="project" value="UniProtKB-KW"/>
</dbReference>
<dbReference type="GO" id="GO:0071555">
    <property type="term" value="P:cell wall organization"/>
    <property type="evidence" value="ECO:0007669"/>
    <property type="project" value="UniProtKB-KW"/>
</dbReference>
<dbReference type="GO" id="GO:0009252">
    <property type="term" value="P:peptidoglycan biosynthetic process"/>
    <property type="evidence" value="ECO:0007669"/>
    <property type="project" value="UniProtKB-UniRule"/>
</dbReference>
<dbReference type="GO" id="GO:0008360">
    <property type="term" value="P:regulation of cell shape"/>
    <property type="evidence" value="ECO:0007669"/>
    <property type="project" value="UniProtKB-KW"/>
</dbReference>
<dbReference type="FunFam" id="3.30.1490.20:FF:000007">
    <property type="entry name" value="D-alanine--D-alanine ligase"/>
    <property type="match status" value="1"/>
</dbReference>
<dbReference type="FunFam" id="3.30.470.20:FF:000008">
    <property type="entry name" value="D-alanine--D-alanine ligase"/>
    <property type="match status" value="1"/>
</dbReference>
<dbReference type="Gene3D" id="3.40.50.20">
    <property type="match status" value="1"/>
</dbReference>
<dbReference type="Gene3D" id="3.30.1490.20">
    <property type="entry name" value="ATP-grasp fold, A domain"/>
    <property type="match status" value="1"/>
</dbReference>
<dbReference type="Gene3D" id="3.30.470.20">
    <property type="entry name" value="ATP-grasp fold, B domain"/>
    <property type="match status" value="1"/>
</dbReference>
<dbReference type="HAMAP" id="MF_00047">
    <property type="entry name" value="Dala_Dala_lig"/>
    <property type="match status" value="1"/>
</dbReference>
<dbReference type="InterPro" id="IPR011761">
    <property type="entry name" value="ATP-grasp"/>
</dbReference>
<dbReference type="InterPro" id="IPR013815">
    <property type="entry name" value="ATP_grasp_subdomain_1"/>
</dbReference>
<dbReference type="InterPro" id="IPR000291">
    <property type="entry name" value="D-Ala_lig_Van_CS"/>
</dbReference>
<dbReference type="InterPro" id="IPR005905">
    <property type="entry name" value="D_ala_D_ala"/>
</dbReference>
<dbReference type="InterPro" id="IPR011095">
    <property type="entry name" value="Dala_Dala_lig_C"/>
</dbReference>
<dbReference type="InterPro" id="IPR011127">
    <property type="entry name" value="Dala_Dala_lig_N"/>
</dbReference>
<dbReference type="InterPro" id="IPR016185">
    <property type="entry name" value="PreATP-grasp_dom_sf"/>
</dbReference>
<dbReference type="NCBIfam" id="TIGR01205">
    <property type="entry name" value="D_ala_D_alaTIGR"/>
    <property type="match status" value="1"/>
</dbReference>
<dbReference type="NCBIfam" id="NF002378">
    <property type="entry name" value="PRK01372.1"/>
    <property type="match status" value="1"/>
</dbReference>
<dbReference type="NCBIfam" id="NF002528">
    <property type="entry name" value="PRK01966.1-4"/>
    <property type="match status" value="1"/>
</dbReference>
<dbReference type="PANTHER" id="PTHR23132">
    <property type="entry name" value="D-ALANINE--D-ALANINE LIGASE"/>
    <property type="match status" value="1"/>
</dbReference>
<dbReference type="PANTHER" id="PTHR23132:SF25">
    <property type="entry name" value="D-ALANINE--D-ALANINE LIGASE A"/>
    <property type="match status" value="1"/>
</dbReference>
<dbReference type="Pfam" id="PF07478">
    <property type="entry name" value="Dala_Dala_lig_C"/>
    <property type="match status" value="1"/>
</dbReference>
<dbReference type="Pfam" id="PF01820">
    <property type="entry name" value="Dala_Dala_lig_N"/>
    <property type="match status" value="1"/>
</dbReference>
<dbReference type="PIRSF" id="PIRSF039102">
    <property type="entry name" value="Ddl/VanB"/>
    <property type="match status" value="1"/>
</dbReference>
<dbReference type="SUPFAM" id="SSF56059">
    <property type="entry name" value="Glutathione synthetase ATP-binding domain-like"/>
    <property type="match status" value="1"/>
</dbReference>
<dbReference type="SUPFAM" id="SSF52440">
    <property type="entry name" value="PreATP-grasp domain"/>
    <property type="match status" value="1"/>
</dbReference>
<dbReference type="PROSITE" id="PS50975">
    <property type="entry name" value="ATP_GRASP"/>
    <property type="match status" value="1"/>
</dbReference>
<dbReference type="PROSITE" id="PS00843">
    <property type="entry name" value="DALA_DALA_LIGASE_1"/>
    <property type="match status" value="1"/>
</dbReference>
<dbReference type="PROSITE" id="PS00844">
    <property type="entry name" value="DALA_DALA_LIGASE_2"/>
    <property type="match status" value="1"/>
</dbReference>
<organism>
    <name type="scientific">Clostridium tetani (strain Massachusetts / E88)</name>
    <dbReference type="NCBI Taxonomy" id="212717"/>
    <lineage>
        <taxon>Bacteria</taxon>
        <taxon>Bacillati</taxon>
        <taxon>Bacillota</taxon>
        <taxon>Clostridia</taxon>
        <taxon>Eubacteriales</taxon>
        <taxon>Clostridiaceae</taxon>
        <taxon>Clostridium</taxon>
    </lineage>
</organism>
<name>DDLB_CLOTE</name>
<proteinExistence type="inferred from homology"/>
<reference key="1">
    <citation type="journal article" date="2003" name="Proc. Natl. Acad. Sci. U.S.A.">
        <title>The genome sequence of Clostridium tetani, the causative agent of tetanus disease.</title>
        <authorList>
            <person name="Brueggemann H."/>
            <person name="Baeumer S."/>
            <person name="Fricke W.F."/>
            <person name="Wiezer A."/>
            <person name="Liesegang H."/>
            <person name="Decker I."/>
            <person name="Herzberg C."/>
            <person name="Martinez-Arias R."/>
            <person name="Merkl R."/>
            <person name="Henne A."/>
            <person name="Gottschalk G."/>
        </authorList>
    </citation>
    <scope>NUCLEOTIDE SEQUENCE [LARGE SCALE GENOMIC DNA]</scope>
    <source>
        <strain>Massachusetts / E88</strain>
    </source>
</reference>
<comment type="function">
    <text evidence="2">Cell wall formation.</text>
</comment>
<comment type="catalytic activity">
    <reaction evidence="2">
        <text>2 D-alanine + ATP = D-alanyl-D-alanine + ADP + phosphate + H(+)</text>
        <dbReference type="Rhea" id="RHEA:11224"/>
        <dbReference type="ChEBI" id="CHEBI:15378"/>
        <dbReference type="ChEBI" id="CHEBI:30616"/>
        <dbReference type="ChEBI" id="CHEBI:43474"/>
        <dbReference type="ChEBI" id="CHEBI:57416"/>
        <dbReference type="ChEBI" id="CHEBI:57822"/>
        <dbReference type="ChEBI" id="CHEBI:456216"/>
        <dbReference type="EC" id="6.3.2.4"/>
    </reaction>
</comment>
<comment type="cofactor">
    <cofactor evidence="1">
        <name>Mg(2+)</name>
        <dbReference type="ChEBI" id="CHEBI:18420"/>
    </cofactor>
    <cofactor evidence="1">
        <name>Mn(2+)</name>
        <dbReference type="ChEBI" id="CHEBI:29035"/>
    </cofactor>
    <text evidence="1">Binds 2 magnesium or manganese ions per subunit.</text>
</comment>
<comment type="pathway">
    <text evidence="2">Cell wall biogenesis; peptidoglycan biosynthesis.</text>
</comment>
<comment type="subcellular location">
    <subcellularLocation>
        <location evidence="2">Cytoplasm</location>
    </subcellularLocation>
</comment>
<comment type="similarity">
    <text evidence="2">Belongs to the D-alanine--D-alanine ligase family.</text>
</comment>
<accession>Q898Z5</accession>
<sequence length="358" mass="40536">MLLAQQLNLYILKGEIIMKKIKIAIVFGGQSTEHEVSRNSVTSILKNINRDKYEICPIGITKEGKWFQYTGDINNIKNGQWEKDNKNKLENGYNVLFNKEVELVFPVLHGLYGEDGTIQGLCKLVGLPCVGPGVLSSALCMDKIYTKYVLENFKFKQANYVVVNKFEYEKNKEEIIKEVEKLQYDVFIKPANSGSSVGITKAHNKEELLKGLEEAFIHDKNVLVEEAINAREIEVAVLGNDDPKAAVPGEIIPAKEFYDYEAKYQNENSELLIPANIDNIKQEEIKELAIKIYKLLGCSGLARVDFLMDKESNEVYFNEVNTLPGFTKISMYPKLWEASGKSYSALIDELIELAINNK</sequence>
<feature type="chain" id="PRO_0000177810" description="D-alanine--D-alanine ligase B">
    <location>
        <begin position="1"/>
        <end position="358"/>
    </location>
</feature>
<feature type="domain" description="ATP-grasp" evidence="2">
    <location>
        <begin position="147"/>
        <end position="352"/>
    </location>
</feature>
<feature type="binding site" evidence="2">
    <location>
        <begin position="179"/>
        <end position="234"/>
    </location>
    <ligand>
        <name>ATP</name>
        <dbReference type="ChEBI" id="CHEBI:30616"/>
    </ligand>
</feature>
<feature type="binding site" evidence="2">
    <location>
        <position position="305"/>
    </location>
    <ligand>
        <name>Mg(2+)</name>
        <dbReference type="ChEBI" id="CHEBI:18420"/>
        <label>1</label>
    </ligand>
</feature>
<feature type="binding site" evidence="2">
    <location>
        <position position="319"/>
    </location>
    <ligand>
        <name>Mg(2+)</name>
        <dbReference type="ChEBI" id="CHEBI:18420"/>
        <label>1</label>
    </ligand>
</feature>
<feature type="binding site" evidence="2">
    <location>
        <position position="319"/>
    </location>
    <ligand>
        <name>Mg(2+)</name>
        <dbReference type="ChEBI" id="CHEBI:18420"/>
        <label>2</label>
    </ligand>
</feature>
<feature type="binding site" evidence="2">
    <location>
        <position position="321"/>
    </location>
    <ligand>
        <name>Mg(2+)</name>
        <dbReference type="ChEBI" id="CHEBI:18420"/>
        <label>2</label>
    </ligand>
</feature>
<protein>
    <recommendedName>
        <fullName evidence="2">D-alanine--D-alanine ligase B</fullName>
        <ecNumber evidence="2">6.3.2.4</ecNumber>
    </recommendedName>
    <alternativeName>
        <fullName evidence="2">D-Ala-D-Ala ligase B</fullName>
    </alternativeName>
    <alternativeName>
        <fullName evidence="2">D-alanylalanine synthetase B</fullName>
    </alternativeName>
</protein>